<feature type="chain" id="PRO_0000142825" description="Protein V">
    <location>
        <begin position="1"/>
        <end position="369"/>
    </location>
</feature>
<feature type="region of interest" description="Disordered" evidence="4">
    <location>
        <begin position="1"/>
        <end position="24"/>
    </location>
</feature>
<feature type="region of interest" description="Disordered" evidence="4">
    <location>
        <begin position="38"/>
        <end position="320"/>
    </location>
</feature>
<feature type="compositionally biased region" description="Basic and acidic residues" evidence="4">
    <location>
        <begin position="7"/>
        <end position="20"/>
    </location>
</feature>
<feature type="compositionally biased region" description="Polar residues" evidence="4">
    <location>
        <begin position="50"/>
        <end position="61"/>
    </location>
</feature>
<feature type="compositionally biased region" description="Basic and acidic residues" evidence="4">
    <location>
        <begin position="99"/>
        <end position="110"/>
    </location>
</feature>
<feature type="compositionally biased region" description="Basic and acidic residues" evidence="4">
    <location>
        <begin position="150"/>
        <end position="168"/>
    </location>
</feature>
<feature type="binding site" evidence="1">
    <location>
        <position position="318"/>
    </location>
    <ligand>
        <name>Zn(2+)</name>
        <dbReference type="ChEBI" id="CHEBI:29105"/>
        <label>1</label>
    </ligand>
</feature>
<feature type="binding site" evidence="1">
    <location>
        <position position="337"/>
    </location>
    <ligand>
        <name>Zn(2+)</name>
        <dbReference type="ChEBI" id="CHEBI:29105"/>
        <label>1</label>
    </ligand>
</feature>
<feature type="binding site" evidence="1">
    <location>
        <position position="341"/>
    </location>
    <ligand>
        <name>Zn(2+)</name>
        <dbReference type="ChEBI" id="CHEBI:29105"/>
        <label>2</label>
    </ligand>
</feature>
<feature type="binding site" evidence="1">
    <location>
        <position position="353"/>
    </location>
    <ligand>
        <name>Zn(2+)</name>
        <dbReference type="ChEBI" id="CHEBI:29105"/>
        <label>2</label>
    </ligand>
</feature>
<feature type="binding site" evidence="1">
    <location>
        <position position="355"/>
    </location>
    <ligand>
        <name>Zn(2+)</name>
        <dbReference type="ChEBI" id="CHEBI:29105"/>
        <label>2</label>
    </ligand>
</feature>
<feature type="binding site" evidence="1">
    <location>
        <position position="358"/>
    </location>
    <ligand>
        <name>Zn(2+)</name>
        <dbReference type="ChEBI" id="CHEBI:29105"/>
        <label>2</label>
    </ligand>
</feature>
<feature type="binding site" evidence="1">
    <location>
        <position position="362"/>
    </location>
    <ligand>
        <name>Zn(2+)</name>
        <dbReference type="ChEBI" id="CHEBI:29105"/>
        <label>1</label>
    </ligand>
</feature>
<feature type="binding site" evidence="1">
    <location>
        <position position="365"/>
    </location>
    <ligand>
        <name>Zn(2+)</name>
        <dbReference type="ChEBI" id="CHEBI:29105"/>
        <label>1</label>
    </ligand>
</feature>
<feature type="modified residue" description="Phosphoserine; by host" evidence="1">
    <location>
        <position position="249"/>
    </location>
</feature>
<feature type="modified residue" description="Phosphoserine; by host" evidence="1">
    <location>
        <position position="257"/>
    </location>
</feature>
<feature type="modified residue" description="Phosphoserine; by host" evidence="1">
    <location>
        <position position="260"/>
    </location>
</feature>
<sequence>MDQDALISKEDSEVEREASGGRESLSDVIGFLDAVLSSEPTDIGGDRSWLHNTINTLQRPGSTHRAKGEGEGEVSTSSTQDNRSGEESRVSGGTSEPEAEAHARNVDKQNIHWATGRGASTDSVPQDLGNGRDSGILEDPPNEGGYPRSGAEDENREMAANPDKRGEDQAEGLPEEIRRSAPLPDEGEGRADNNGRGVESGSPHSARVTGVLVIPSPELEEAVLQRNKRRPANSGSRSLTPVVVPSTRSPPPDHDNSTRSPPRKPPTTQDEHTNPRNTPAVRIKDRRPPTGTRSAPDRPTDGYPTHPGPETDATKKGHRREHIIYERDGYIVNESWCNPVCSRIRVISRRELCVCKACPKICKLCRDDI</sequence>
<protein>
    <recommendedName>
        <fullName>Protein V</fullName>
    </recommendedName>
</protein>
<gene>
    <name type="primary">P/V/C</name>
</gene>
<evidence type="ECO:0000250" key="1"/>
<evidence type="ECO:0000250" key="2">
    <source>
        <dbReference type="UniProtKB" id="P69280"/>
    </source>
</evidence>
<evidence type="ECO:0000250" key="3">
    <source>
        <dbReference type="UniProtKB" id="P69282"/>
    </source>
</evidence>
<evidence type="ECO:0000256" key="4">
    <source>
        <dbReference type="SAM" id="MobiDB-lite"/>
    </source>
</evidence>
<evidence type="ECO:0000305" key="5"/>
<reference key="1">
    <citation type="journal article" date="2001" name="Virus Genes">
        <title>Conserved and non-conserved regions in the Sendai virus genome: evolution of a gene possessing overlapping reading frames.</title>
        <authorList>
            <person name="Fujii Y."/>
            <person name="Kiyotani K."/>
            <person name="Yoshida T."/>
            <person name="Sakaguchi T."/>
        </authorList>
    </citation>
    <scope>NUCLEOTIDE SEQUENCE [GENOMIC RNA]</scope>
</reference>
<reference key="2">
    <citation type="journal article" date="2002" name="J. Virol.">
        <title>Involvement of the leader sequence in Sendai virus pathogenesis revealed by recovery of a pathogenic field isolate from cDNA.</title>
        <authorList>
            <person name="Fujii Y."/>
            <person name="Sakaguchi T."/>
            <person name="Kiyotani K."/>
            <person name="Huang C."/>
            <person name="Fukuhara N."/>
            <person name="Egi Y."/>
            <person name="Yoshida T."/>
        </authorList>
    </citation>
    <scope>NUCLEOTIDE SEQUENCE [GENOMIC RNA]</scope>
</reference>
<accession>Q9DUE1</accession>
<name>V_SENDA</name>
<comment type="function">
    <text evidence="2 3">Plays an essential role in the inhibition of host immune response. Prevents the establishment of cellular antiviral state by blocking interferon-alpha/beta (IFN-alpha/beta) production and signaling pathway. Interacts with host IFIH1/MDA5 and DHX58/LGP2 to inhibit the transduction pathway involved in the activation of IFN-beta promoter, thus protecting the virus against cell antiviral state (By similarity). Also interacts with and inhibits host IRF3 (By similarity). Blocks the type I interferon signaling pathway by disrupting the RIG-I signaling pathway (By similarity).</text>
</comment>
<comment type="subunit">
    <text evidence="3">Interacts with host IFIH1/MDA5 and DHX58/LGP2. Interacts with host IRF3. Interacts with host RIGI regulatory protein (via CARDs domain) and host TRIM25 (via SPRY domain); these interactions prevent TRIM25-mediated ubiquitination of RIG-I and disrupts downstream RIG-I signaling.</text>
</comment>
<comment type="subcellular location">
    <subcellularLocation>
        <location evidence="1">Host cytoplasm</location>
    </subcellularLocation>
</comment>
<comment type="domain">
    <text evidence="1">The C-terminal zinc-binding domain is involved in binding to IFIH1/MDA5. This domain is also involved in viral pathogenesis (By similarity).</text>
</comment>
<comment type="RNA editing">
    <location>
        <position position="318" evidence="1"/>
    </location>
    <text evidence="1">Partially edited. RNA editing at this position consists of an insertion of one or two guanine nucleotides. The sequence displayed here is the V protein, derived from the +1G edited RNA. The unedited RNA gives rise to the P protein (AC Q9DUE2), the +2G edited RNA gives rise to the W protein (AC P69286) (By similarity).</text>
</comment>
<comment type="miscellaneous">
    <text>The P/V/C gene has two overlapping open reading frames. One encodes the P/V/W proteins and the other the C/Y proteins.</text>
</comment>
<comment type="similarity">
    <text evidence="5">Belongs to the paramyxoviruses V protein family.</text>
</comment>
<keyword id="KW-1035">Host cytoplasm</keyword>
<keyword id="KW-0945">Host-virus interaction</keyword>
<keyword id="KW-1090">Inhibition of host innate immune response by virus</keyword>
<keyword id="KW-1092">Inhibition of host IRF3 by virus</keyword>
<keyword id="KW-1089">Inhibition of host MDA5 by virus</keyword>
<keyword id="KW-1113">Inhibition of host RLR pathway by virus</keyword>
<keyword id="KW-0922">Interferon antiviral system evasion</keyword>
<keyword id="KW-0479">Metal-binding</keyword>
<keyword id="KW-0597">Phosphoprotein</keyword>
<keyword id="KW-0691">RNA editing</keyword>
<keyword id="KW-0899">Viral immunoevasion</keyword>
<keyword id="KW-0862">Zinc</keyword>
<organism>
    <name type="scientific">Sendai virus (strain Hamamatsu)</name>
    <name type="common">SeV</name>
    <dbReference type="NCBI Taxonomy" id="302271"/>
    <lineage>
        <taxon>Viruses</taxon>
        <taxon>Riboviria</taxon>
        <taxon>Orthornavirae</taxon>
        <taxon>Negarnaviricota</taxon>
        <taxon>Haploviricotina</taxon>
        <taxon>Monjiviricetes</taxon>
        <taxon>Mononegavirales</taxon>
        <taxon>Paramyxoviridae</taxon>
        <taxon>Feraresvirinae</taxon>
        <taxon>Respirovirus</taxon>
        <taxon>Respirovirus muris</taxon>
    </lineage>
</organism>
<proteinExistence type="inferred from homology"/>
<dbReference type="EMBL" id="AB039658">
    <property type="protein sequence ID" value="BAB20021.1"/>
    <property type="molecule type" value="Genomic_RNA"/>
</dbReference>
<dbReference type="EMBL" id="AB065186">
    <property type="protein sequence ID" value="BAC79127.1"/>
    <property type="molecule type" value="Genomic_RNA"/>
</dbReference>
<dbReference type="EMBL" id="AB065187">
    <property type="protein sequence ID" value="BAC07507.1"/>
    <property type="molecule type" value="Genomic_RNA"/>
</dbReference>
<dbReference type="EMBL" id="AB065188">
    <property type="protein sequence ID" value="BAC79135.1"/>
    <property type="molecule type" value="Genomic_RNA"/>
</dbReference>
<dbReference type="EMBL" id="AB065189">
    <property type="protein sequence ID" value="BAC79143.1"/>
    <property type="molecule type" value="Genomic_RNA"/>
</dbReference>
<dbReference type="SMR" id="Q9DUE1"/>
<dbReference type="Proteomes" id="UP000007191">
    <property type="component" value="Genome"/>
</dbReference>
<dbReference type="Proteomes" id="UP000008510">
    <property type="component" value="Genome"/>
</dbReference>
<dbReference type="Proteomes" id="UP000008857">
    <property type="component" value="Genome"/>
</dbReference>
<dbReference type="Proteomes" id="UP000180650">
    <property type="component" value="Genome"/>
</dbReference>
<dbReference type="Proteomes" id="UP000180718">
    <property type="component" value="Genome"/>
</dbReference>
<dbReference type="GO" id="GO:0030430">
    <property type="term" value="C:host cell cytoplasm"/>
    <property type="evidence" value="ECO:0007669"/>
    <property type="project" value="UniProtKB-SubCell"/>
</dbReference>
<dbReference type="GO" id="GO:0046872">
    <property type="term" value="F:metal ion binding"/>
    <property type="evidence" value="ECO:0007669"/>
    <property type="project" value="UniProtKB-KW"/>
</dbReference>
<dbReference type="GO" id="GO:0039548">
    <property type="term" value="P:symbiont-mediated suppression of host cytoplasmic pattern recognition receptor signaling pathway via inhibition of IRF3 activity"/>
    <property type="evidence" value="ECO:0007669"/>
    <property type="project" value="UniProtKB-KW"/>
</dbReference>
<dbReference type="GO" id="GO:0039554">
    <property type="term" value="P:symbiont-mediated suppression of host cytoplasmic pattern recognition receptor signaling pathway via inhibition of MDA-5 activity"/>
    <property type="evidence" value="ECO:0007669"/>
    <property type="project" value="UniProtKB-KW"/>
</dbReference>
<dbReference type="Gene3D" id="4.10.80.340">
    <property type="match status" value="1"/>
</dbReference>
<dbReference type="InterPro" id="IPR024279">
    <property type="entry name" value="Paramyx_V_Zn-bd"/>
</dbReference>
<dbReference type="Pfam" id="PF13008">
    <property type="entry name" value="zf-Paramyx-P"/>
    <property type="match status" value="1"/>
</dbReference>
<organismHost>
    <name type="scientific">Cavia cutleri</name>
    <name type="common">Guinea pig</name>
    <dbReference type="NCBI Taxonomy" id="10144"/>
</organismHost>
<organismHost>
    <name type="scientific">Cricetidae sp.</name>
    <name type="common">Hamster</name>
    <dbReference type="NCBI Taxonomy" id="36483"/>
</organismHost>
<organismHost>
    <name type="scientific">Mus musculus</name>
    <name type="common">Mouse</name>
    <dbReference type="NCBI Taxonomy" id="10090"/>
</organismHost>
<organismHost>
    <name type="scientific">Rattus norvegicus</name>
    <name type="common">Rat</name>
    <dbReference type="NCBI Taxonomy" id="10116"/>
</organismHost>